<feature type="chain" id="PRO_0000295181" description="Pyruvate kinase">
    <location>
        <begin position="1"/>
        <end position="461"/>
    </location>
</feature>
<feature type="binding site" evidence="1">
    <location>
        <position position="46"/>
    </location>
    <ligand>
        <name>substrate</name>
    </ligand>
</feature>
<feature type="binding site" evidence="2">
    <location>
        <begin position="48"/>
        <end position="51"/>
    </location>
    <ligand>
        <name>ATP</name>
        <dbReference type="ChEBI" id="CHEBI:30616"/>
    </ligand>
</feature>
<feature type="binding site" evidence="1">
    <location>
        <position position="48"/>
    </location>
    <ligand>
        <name>K(+)</name>
        <dbReference type="ChEBI" id="CHEBI:29103"/>
    </ligand>
</feature>
<feature type="binding site" evidence="1">
    <location>
        <position position="80"/>
    </location>
    <ligand>
        <name>K(+)</name>
        <dbReference type="ChEBI" id="CHEBI:29103"/>
    </ligand>
</feature>
<feature type="binding site" evidence="2">
    <location>
        <position position="87"/>
    </location>
    <ligand>
        <name>ATP</name>
        <dbReference type="ChEBI" id="CHEBI:30616"/>
    </ligand>
</feature>
<feature type="binding site" evidence="2">
    <location>
        <position position="165"/>
    </location>
    <ligand>
        <name>ATP</name>
        <dbReference type="ChEBI" id="CHEBI:30616"/>
    </ligand>
</feature>
<feature type="binding site" evidence="1">
    <location>
        <position position="232"/>
    </location>
    <ligand>
        <name>Mg(2+)</name>
        <dbReference type="ChEBI" id="CHEBI:18420"/>
    </ligand>
</feature>
<feature type="binding site" evidence="1">
    <location>
        <position position="255"/>
    </location>
    <ligand>
        <name>substrate</name>
    </ligand>
</feature>
<feature type="binding site" evidence="1">
    <location>
        <position position="256"/>
    </location>
    <ligand>
        <name>Mg(2+)</name>
        <dbReference type="ChEBI" id="CHEBI:18420"/>
    </ligand>
</feature>
<feature type="binding site" evidence="1">
    <location>
        <position position="256"/>
    </location>
    <ligand>
        <name>substrate</name>
    </ligand>
</feature>
<feature type="binding site" evidence="1">
    <location>
        <position position="288"/>
    </location>
    <ligand>
        <name>substrate</name>
    </ligand>
</feature>
<feature type="site" description="Transition state stabilizer" evidence="1">
    <location>
        <position position="230"/>
    </location>
</feature>
<feature type="strand" evidence="5">
    <location>
        <begin position="16"/>
        <end position="22"/>
    </location>
</feature>
<feature type="helix" evidence="5">
    <location>
        <begin position="25"/>
        <end position="28"/>
    </location>
</feature>
<feature type="helix" evidence="5">
    <location>
        <begin position="32"/>
        <end position="39"/>
    </location>
</feature>
<feature type="strand" evidence="5">
    <location>
        <begin position="43"/>
        <end position="48"/>
    </location>
</feature>
<feature type="turn" evidence="5">
    <location>
        <begin position="49"/>
        <end position="51"/>
    </location>
</feature>
<feature type="helix" evidence="5">
    <location>
        <begin position="54"/>
        <end position="71"/>
    </location>
</feature>
<feature type="strand" evidence="5">
    <location>
        <begin position="76"/>
        <end position="80"/>
    </location>
</feature>
<feature type="strand" evidence="5">
    <location>
        <begin position="94"/>
        <end position="96"/>
    </location>
</feature>
<feature type="strand" evidence="5">
    <location>
        <begin position="101"/>
        <end position="106"/>
    </location>
</feature>
<feature type="strand" evidence="5">
    <location>
        <begin position="112"/>
        <end position="117"/>
    </location>
</feature>
<feature type="helix" evidence="5">
    <location>
        <begin position="120"/>
        <end position="125"/>
    </location>
</feature>
<feature type="strand" evidence="5">
    <location>
        <begin position="131"/>
        <end position="134"/>
    </location>
</feature>
<feature type="helix" evidence="5">
    <location>
        <begin position="135"/>
        <end position="137"/>
    </location>
</feature>
<feature type="strand" evidence="5">
    <location>
        <begin position="139"/>
        <end position="146"/>
    </location>
</feature>
<feature type="strand" evidence="5">
    <location>
        <begin position="148"/>
        <end position="157"/>
    </location>
</feature>
<feature type="strand" evidence="5">
    <location>
        <begin position="159"/>
        <end position="161"/>
    </location>
</feature>
<feature type="strand" evidence="5">
    <location>
        <begin position="166"/>
        <end position="169"/>
    </location>
</feature>
<feature type="helix" evidence="5">
    <location>
        <begin position="181"/>
        <end position="190"/>
    </location>
</feature>
<feature type="helix" evidence="5">
    <location>
        <begin position="191"/>
        <end position="196"/>
    </location>
</feature>
<feature type="strand" evidence="5">
    <location>
        <begin position="199"/>
        <end position="202"/>
    </location>
</feature>
<feature type="helix" evidence="5">
    <location>
        <begin position="208"/>
        <end position="220"/>
    </location>
</feature>
<feature type="strand" evidence="5">
    <location>
        <begin position="226"/>
        <end position="231"/>
    </location>
</feature>
<feature type="helix" evidence="5">
    <location>
        <begin position="234"/>
        <end position="238"/>
    </location>
</feature>
<feature type="helix" evidence="5">
    <location>
        <begin position="240"/>
        <end position="245"/>
    </location>
</feature>
<feature type="strand" evidence="5">
    <location>
        <begin position="248"/>
        <end position="253"/>
    </location>
</feature>
<feature type="helix" evidence="5">
    <location>
        <begin position="254"/>
        <end position="257"/>
    </location>
</feature>
<feature type="turn" evidence="5">
    <location>
        <begin position="258"/>
        <end position="260"/>
    </location>
</feature>
<feature type="turn" evidence="5">
    <location>
        <begin position="263"/>
        <end position="265"/>
    </location>
</feature>
<feature type="helix" evidence="5">
    <location>
        <begin position="266"/>
        <end position="279"/>
    </location>
</feature>
<feature type="strand" evidence="5">
    <location>
        <begin position="284"/>
        <end position="291"/>
    </location>
</feature>
<feature type="helix" evidence="5">
    <location>
        <begin position="292"/>
        <end position="295"/>
    </location>
</feature>
<feature type="helix" evidence="5">
    <location>
        <begin position="302"/>
        <end position="313"/>
    </location>
</feature>
<feature type="strand" evidence="5">
    <location>
        <begin position="317"/>
        <end position="321"/>
    </location>
</feature>
<feature type="helix" evidence="5">
    <location>
        <begin position="323"/>
        <end position="326"/>
    </location>
</feature>
<feature type="helix" evidence="5">
    <location>
        <begin position="331"/>
        <end position="343"/>
    </location>
</feature>
<feature type="helix" evidence="5">
    <location>
        <begin position="358"/>
        <end position="373"/>
    </location>
</feature>
<feature type="strand" evidence="5">
    <location>
        <begin position="376"/>
        <end position="380"/>
    </location>
</feature>
<feature type="strand" evidence="5">
    <location>
        <begin position="382"/>
        <end position="384"/>
    </location>
</feature>
<feature type="helix" evidence="5">
    <location>
        <begin position="385"/>
        <end position="391"/>
    </location>
</feature>
<feature type="strand" evidence="5">
    <location>
        <begin position="399"/>
        <end position="404"/>
    </location>
</feature>
<feature type="helix" evidence="5">
    <location>
        <begin position="406"/>
        <end position="412"/>
    </location>
</feature>
<feature type="strand" evidence="5">
    <location>
        <begin position="418"/>
        <end position="422"/>
    </location>
</feature>
<feature type="helix" evidence="5">
    <location>
        <begin position="428"/>
        <end position="439"/>
    </location>
</feature>
<feature type="strand" evidence="5">
    <location>
        <begin position="442"/>
        <end position="448"/>
    </location>
</feature>
<feature type="strand" evidence="5">
    <location>
        <begin position="456"/>
        <end position="460"/>
    </location>
</feature>
<name>KPYK_PYRAE</name>
<reference key="1">
    <citation type="journal article" date="2002" name="Proc. Natl. Acad. Sci. U.S.A.">
        <title>Genome sequence of the hyperthermophilic crenarchaeon Pyrobaculum aerophilum.</title>
        <authorList>
            <person name="Fitz-Gibbon S.T."/>
            <person name="Ladner H."/>
            <person name="Kim U.-J."/>
            <person name="Stetter K.O."/>
            <person name="Simon M.I."/>
            <person name="Miller J.H."/>
        </authorList>
    </citation>
    <scope>NUCLEOTIDE SEQUENCE [LARGE SCALE GENOMIC DNA]</scope>
    <source>
        <strain>ATCC 51768 / DSM 7523 / JCM 9630 / CIP 104966 / NBRC 100827 / IM2</strain>
    </source>
</reference>
<reference key="2">
    <citation type="journal article" date="2003" name="J. Biol. Chem.">
        <title>Comparative analysis of pyruvate kinases from the hyperthermophilic archaea Archaeoglobus fulgidus, Aeropyrum pernix, and Pyrobaculum aerophilum and the hyperthermophilic bacterium Thermotoga maritima: unusual regulatory properties in hyperthermophilic archaea.</title>
        <authorList>
            <person name="Johnsen U."/>
            <person name="Hansen T."/>
            <person name="Schoenheit P."/>
        </authorList>
    </citation>
    <scope>BIOPHYSICOCHEMICAL PROPERTIES</scope>
    <scope>COFACTOR</scope>
    <scope>SUBUNIT</scope>
    <scope>REGULATION</scope>
    <source>
        <strain>ATCC 51768 / DSM 7523 / JCM 9630 / CIP 104966 / NBRC 100827 / IM2</strain>
    </source>
</reference>
<protein>
    <recommendedName>
        <fullName>Pyruvate kinase</fullName>
        <shortName>PK</shortName>
        <ecNumber>2.7.1.40</ecNumber>
    </recommendedName>
</protein>
<keyword id="KW-0002">3D-structure</keyword>
<keyword id="KW-0067">ATP-binding</keyword>
<keyword id="KW-0324">Glycolysis</keyword>
<keyword id="KW-0418">Kinase</keyword>
<keyword id="KW-0460">Magnesium</keyword>
<keyword id="KW-0479">Metal-binding</keyword>
<keyword id="KW-0547">Nucleotide-binding</keyword>
<keyword id="KW-0630">Potassium</keyword>
<keyword id="KW-0670">Pyruvate</keyword>
<keyword id="KW-1185">Reference proteome</keyword>
<keyword id="KW-0808">Transferase</keyword>
<organism>
    <name type="scientific">Pyrobaculum aerophilum (strain ATCC 51768 / DSM 7523 / JCM 9630 / CIP 104966 / NBRC 100827 / IM2)</name>
    <dbReference type="NCBI Taxonomy" id="178306"/>
    <lineage>
        <taxon>Archaea</taxon>
        <taxon>Thermoproteota</taxon>
        <taxon>Thermoprotei</taxon>
        <taxon>Thermoproteales</taxon>
        <taxon>Thermoproteaceae</taxon>
        <taxon>Pyrobaculum</taxon>
    </lineage>
</organism>
<comment type="catalytic activity">
    <reaction>
        <text>pyruvate + ATP = phosphoenolpyruvate + ADP + H(+)</text>
        <dbReference type="Rhea" id="RHEA:18157"/>
        <dbReference type="ChEBI" id="CHEBI:15361"/>
        <dbReference type="ChEBI" id="CHEBI:15378"/>
        <dbReference type="ChEBI" id="CHEBI:30616"/>
        <dbReference type="ChEBI" id="CHEBI:58702"/>
        <dbReference type="ChEBI" id="CHEBI:456216"/>
        <dbReference type="EC" id="2.7.1.40"/>
    </reaction>
</comment>
<comment type="cofactor">
    <cofactor evidence="3">
        <name>a divalent metal cation</name>
        <dbReference type="ChEBI" id="CHEBI:60240"/>
    </cofactor>
</comment>
<comment type="activity regulation">
    <text>Not activated by classical allosteric effectors.</text>
</comment>
<comment type="biophysicochemical properties">
    <kinetics>
        <Vmax evidence="3">46.0 umol/min/mg enzyme (at 65 degrees Celsius)</Vmax>
    </kinetics>
    <phDependence>
        <text evidence="3">Optimum pH is 6.0.</text>
    </phDependence>
    <temperatureDependence>
        <text evidence="3">Optimum temperature is higher than 98 degrees Celsius. Thermostable for 2 hours up to 100 degrees Celsius.</text>
    </temperatureDependence>
</comment>
<comment type="pathway">
    <text>Carbohydrate degradation; glycolysis; pyruvate from D-glyceraldehyde 3-phosphate: step 5/5.</text>
</comment>
<comment type="subunit">
    <text evidence="3">Homotetramer.</text>
</comment>
<comment type="similarity">
    <text evidence="4">Belongs to the pyruvate kinase family.</text>
</comment>
<dbReference type="EC" id="2.7.1.40"/>
<dbReference type="EMBL" id="AE009441">
    <property type="protein sequence ID" value="AAL63053.1"/>
    <property type="molecule type" value="Genomic_DNA"/>
</dbReference>
<dbReference type="RefSeq" id="WP_011007525.1">
    <property type="nucleotide sequence ID" value="NC_003364.1"/>
</dbReference>
<dbReference type="PDB" id="3QTG">
    <property type="method" value="X-ray"/>
    <property type="resolution" value="2.20 A"/>
    <property type="chains" value="A/B=1-461"/>
</dbReference>
<dbReference type="PDBsum" id="3QTG"/>
<dbReference type="SMR" id="Q8ZYE0"/>
<dbReference type="FunCoup" id="Q8ZYE0">
    <property type="interactions" value="139"/>
</dbReference>
<dbReference type="STRING" id="178306.PAE0819"/>
<dbReference type="EnsemblBacteria" id="AAL63053">
    <property type="protein sequence ID" value="AAL63053"/>
    <property type="gene ID" value="PAE0819"/>
</dbReference>
<dbReference type="GeneID" id="1465282"/>
<dbReference type="KEGG" id="pai:PAE0819"/>
<dbReference type="PATRIC" id="fig|178306.9.peg.602"/>
<dbReference type="eggNOG" id="arCOG04120">
    <property type="taxonomic scope" value="Archaea"/>
</dbReference>
<dbReference type="HOGENOM" id="CLU_015439_1_1_2"/>
<dbReference type="InParanoid" id="Q8ZYE0"/>
<dbReference type="BRENDA" id="2.7.1.40">
    <property type="organism ID" value="5239"/>
</dbReference>
<dbReference type="UniPathway" id="UPA00109">
    <property type="reaction ID" value="UER00188"/>
</dbReference>
<dbReference type="EvolutionaryTrace" id="Q8ZYE0"/>
<dbReference type="Proteomes" id="UP000002439">
    <property type="component" value="Chromosome"/>
</dbReference>
<dbReference type="GO" id="GO:0005737">
    <property type="term" value="C:cytoplasm"/>
    <property type="evidence" value="ECO:0000318"/>
    <property type="project" value="GO_Central"/>
</dbReference>
<dbReference type="GO" id="GO:0005524">
    <property type="term" value="F:ATP binding"/>
    <property type="evidence" value="ECO:0007669"/>
    <property type="project" value="UniProtKB-KW"/>
</dbReference>
<dbReference type="GO" id="GO:0016301">
    <property type="term" value="F:kinase activity"/>
    <property type="evidence" value="ECO:0007669"/>
    <property type="project" value="UniProtKB-KW"/>
</dbReference>
<dbReference type="GO" id="GO:0000287">
    <property type="term" value="F:magnesium ion binding"/>
    <property type="evidence" value="ECO:0007669"/>
    <property type="project" value="InterPro"/>
</dbReference>
<dbReference type="GO" id="GO:0030955">
    <property type="term" value="F:potassium ion binding"/>
    <property type="evidence" value="ECO:0007669"/>
    <property type="project" value="InterPro"/>
</dbReference>
<dbReference type="GO" id="GO:0004743">
    <property type="term" value="F:pyruvate kinase activity"/>
    <property type="evidence" value="ECO:0000318"/>
    <property type="project" value="GO_Central"/>
</dbReference>
<dbReference type="GO" id="GO:0006096">
    <property type="term" value="P:glycolytic process"/>
    <property type="evidence" value="ECO:0000318"/>
    <property type="project" value="GO_Central"/>
</dbReference>
<dbReference type="Gene3D" id="3.20.20.60">
    <property type="entry name" value="Phosphoenolpyruvate-binding domains"/>
    <property type="match status" value="1"/>
</dbReference>
<dbReference type="Gene3D" id="2.40.33.10">
    <property type="entry name" value="PK beta-barrel domain-like"/>
    <property type="match status" value="1"/>
</dbReference>
<dbReference type="Gene3D" id="3.40.1380.20">
    <property type="entry name" value="Pyruvate kinase, C-terminal domain"/>
    <property type="match status" value="1"/>
</dbReference>
<dbReference type="InterPro" id="IPR001697">
    <property type="entry name" value="Pyr_Knase"/>
</dbReference>
<dbReference type="InterPro" id="IPR015813">
    <property type="entry name" value="Pyrv/PenolPyrv_kinase-like_dom"/>
</dbReference>
<dbReference type="InterPro" id="IPR040442">
    <property type="entry name" value="Pyrv_kinase-like_dom_sf"/>
</dbReference>
<dbReference type="InterPro" id="IPR011037">
    <property type="entry name" value="Pyrv_Knase-like_insert_dom_sf"/>
</dbReference>
<dbReference type="InterPro" id="IPR015793">
    <property type="entry name" value="Pyrv_Knase_brl"/>
</dbReference>
<dbReference type="InterPro" id="IPR015795">
    <property type="entry name" value="Pyrv_Knase_C"/>
</dbReference>
<dbReference type="InterPro" id="IPR036918">
    <property type="entry name" value="Pyrv_Knase_C_sf"/>
</dbReference>
<dbReference type="InterPro" id="IPR015806">
    <property type="entry name" value="Pyrv_Knase_insert_dom_sf"/>
</dbReference>
<dbReference type="NCBIfam" id="TIGR01064">
    <property type="entry name" value="pyruv_kin"/>
    <property type="match status" value="1"/>
</dbReference>
<dbReference type="PANTHER" id="PTHR11817">
    <property type="entry name" value="PYRUVATE KINASE"/>
    <property type="match status" value="1"/>
</dbReference>
<dbReference type="Pfam" id="PF00224">
    <property type="entry name" value="PK"/>
    <property type="match status" value="1"/>
</dbReference>
<dbReference type="Pfam" id="PF02887">
    <property type="entry name" value="PK_C"/>
    <property type="match status" value="1"/>
</dbReference>
<dbReference type="PRINTS" id="PR01050">
    <property type="entry name" value="PYRUVTKNASE"/>
</dbReference>
<dbReference type="SUPFAM" id="SSF51621">
    <property type="entry name" value="Phosphoenolpyruvate/pyruvate domain"/>
    <property type="match status" value="1"/>
</dbReference>
<dbReference type="SUPFAM" id="SSF50800">
    <property type="entry name" value="PK beta-barrel domain-like"/>
    <property type="match status" value="1"/>
</dbReference>
<dbReference type="SUPFAM" id="SSF52935">
    <property type="entry name" value="PK C-terminal domain-like"/>
    <property type="match status" value="1"/>
</dbReference>
<sequence length="461" mass="50262">MSAPRGDHAILRARNLTKRVATLGPSTDVLRPDELIKFLDLVDGVRINLAHASPNEVKFRIEAVRSYEKAKNRPLAVIVDLKGPSIRVGSTSPINVQEGEVVKFKLSDKSDGTYIPVPNKAFFSAVEQNDVILMLDGRLRLKVTNTGSDWIEAVAESSGVITGGKAIVVEGKDYDISTPAEEDVEALKAISPIRDNIDYVAISLAKSCKDVDSVRSLLTELGFQSQVAVKIETKGAVNNLEELVQCSDYVVVARGDLGLHYGLDALPIVQRRIVHTSLKYGKPIAVATQLLDSMQSSPIPTRAEINDVFTTASMGVDSLWLTNETASGKYPLAAVSWLSRILMNVEYQIPQSPLLQNSRDRFAKGLVELAQDLGANILVFSMSGTLARRIAKFRPRGVVYVGTPNVRVARSLSIVWALEPLYIPAENYEEGLEKLISLKGTTPFVATYGIRGGVHSVKVKL</sequence>
<evidence type="ECO:0000250" key="1"/>
<evidence type="ECO:0000250" key="2">
    <source>
        <dbReference type="UniProtKB" id="P14618"/>
    </source>
</evidence>
<evidence type="ECO:0000269" key="3">
    <source>
    </source>
</evidence>
<evidence type="ECO:0000305" key="4"/>
<evidence type="ECO:0007829" key="5">
    <source>
        <dbReference type="PDB" id="3QTG"/>
    </source>
</evidence>
<accession>Q8ZYE0</accession>
<gene>
    <name type="primary">pyk</name>
    <name type="ordered locus">PAE0819</name>
</gene>
<proteinExistence type="evidence at protein level"/>